<comment type="function">
    <text evidence="4 5">Toxic component of a toxin-immunity protein module, which functions as a cellular contact-dependent growth inhibition (CDI) system. CDI modules allow bacteria to communicate with and inhibit the growth of closely related neighboring bacteria in a contact-dependent fashion. The C-terminal 160 residues (CT domain) acts as a general tRNA nuclease, and inhibits growth in E.coli upon overexpression. Cleaves specifically within the T-loop of E.coli tRNA2(Arg) (between the post-transcriptionally modified thymidine-T55 and pseudouridine-Y56); also degrades most other tRNAs (PubMed:22435733). Cleaves unmodified tRNA(Gln) and tRNA(Asp), showing the universal post-translational tRNA modifications present in the T-loop are not required for CT activity (PubMed:27445337). Inactive CT domain binds tRNA, probably in a complex with 4 CT domains and 4 tRNAs (PubMed:27445337). Toxic activity is neutralized by coexpression of the cognate immunity protein CdiI in E.coli, but not by non-cognate immunity proteins from other strains of B.pseudomallei (PubMed:22435733, PubMed:27445337).</text>
</comment>
<comment type="function">
    <text evidence="1 2">The CdiA protein is thought to be exported from the cell through the central lumen of CdiB, the other half of its two-partner system (TPS). The TPS domain probably remains associated with CdiB while the FHA-1 domain forms an extended filament with the receptor-binding domain (RBD) at its extremity; in the secretion arrested state the C-terminus of the RBD domain form a hairpin-like structure as the FHA-2, PT and CT domains are periplasmic. Upon binding to a target cell outer membrane receptor a signal is transmitted to activate secretion. The filament elongates slightly, the rest of CdiA is secreted and the FHA-2 domain becomes stably associated with the target cell's outer membrane where it facilitates entry of the toxic CT domain into the target cell periplasm. From there the toxic CT domain is cleaved and gains access to the target cell cytoplasm via an inner membrane protein.</text>
</comment>
<comment type="subunit">
    <text evidence="4 5">Specifically interacts with cognate immunity protein CdiI, which blocks its tRNA nuclease activity (PubMed:22435733, PubMed:27445337). The CT domain forms a tetramer both with and without tRNA; each subunit binds tRNA in its presence (PubMed:27445337).</text>
</comment>
<comment type="subcellular location">
    <subcellularLocation>
        <location evidence="2">Target cell</location>
        <location evidence="2">Target cell cytoplasm</location>
    </subcellularLocation>
    <text evidence="2">Secreted to the cell surface by CdiB, its two partner secretion pathway (TPS) partner.</text>
</comment>
<comment type="domain">
    <text evidence="4">The C-terminal domain (CT) has toxic activity, which can be exchanged between N-terminal sections from different toxin molecules.</text>
</comment>
<comment type="similarity">
    <text evidence="7">Belongs to the CdiA toxin family.</text>
</comment>
<keyword id="KW-0002">3D-structure</keyword>
<keyword id="KW-0255">Endonuclease</keyword>
<keyword id="KW-0378">Hydrolase</keyword>
<keyword id="KW-0540">Nuclease</keyword>
<keyword id="KW-0694">RNA-binding</keyword>
<keyword id="KW-1266">Target cell cytoplasm</keyword>
<keyword id="KW-0800">Toxin</keyword>
<keyword id="KW-0820">tRNA-binding</keyword>
<keyword id="KW-0843">Virulence</keyword>
<dbReference type="EC" id="3.1.-.-"/>
<dbReference type="EMBL" id="JQ423914">
    <property type="protein sequence ID" value="AFG17280.1"/>
    <property type="molecule type" value="Genomic_DNA"/>
</dbReference>
<dbReference type="PDB" id="5J4A">
    <property type="method" value="X-ray"/>
    <property type="resolution" value="2.00 A"/>
    <property type="chains" value="A/C=1148-1307"/>
</dbReference>
<dbReference type="PDBsum" id="5J4A"/>
<dbReference type="SMR" id="H9T8G6"/>
<dbReference type="GO" id="GO:0004519">
    <property type="term" value="F:endonuclease activity"/>
    <property type="evidence" value="ECO:0007669"/>
    <property type="project" value="UniProtKB-KW"/>
</dbReference>
<dbReference type="GO" id="GO:0090729">
    <property type="term" value="F:toxin activity"/>
    <property type="evidence" value="ECO:0007669"/>
    <property type="project" value="UniProtKB-KW"/>
</dbReference>
<dbReference type="GO" id="GO:0000049">
    <property type="term" value="F:tRNA binding"/>
    <property type="evidence" value="ECO:0007669"/>
    <property type="project" value="UniProtKB-KW"/>
</dbReference>
<dbReference type="CDD" id="cd20726">
    <property type="entry name" value="CDI_toxin_BpE479_tRNase-like"/>
    <property type="match status" value="1"/>
</dbReference>
<dbReference type="InterPro" id="IPR041620">
    <property type="entry name" value="CdiA_C_tRNase"/>
</dbReference>
<dbReference type="InterPro" id="IPR025157">
    <property type="entry name" value="Hemagglutinin_rpt"/>
</dbReference>
<dbReference type="Pfam" id="PF18664">
    <property type="entry name" value="CdiA_C_tRNase"/>
    <property type="match status" value="1"/>
</dbReference>
<dbReference type="Pfam" id="PF13332">
    <property type="entry name" value="Fil_haemagg_2"/>
    <property type="match status" value="3"/>
</dbReference>
<feature type="chain" id="PRO_0000429693" description="tRNA nuclease CdiA">
    <location>
        <begin position="1" status="less than"/>
        <end position="1307"/>
    </location>
</feature>
<feature type="region of interest" description="FHA-2" evidence="7">
    <location>
        <begin position="1" status="less than"/>
        <end position="251"/>
    </location>
</feature>
<feature type="region of interest" description="Pretoxin (PT) domain" evidence="7">
    <location>
        <begin position="252"/>
        <end position="991"/>
    </location>
</feature>
<feature type="region of interest" description="Disordered" evidence="3">
    <location>
        <begin position="317"/>
        <end position="340"/>
    </location>
</feature>
<feature type="region of interest" description="Disordered" evidence="3">
    <location>
        <begin position="491"/>
        <end position="518"/>
    </location>
</feature>
<feature type="region of interest" description="Probable inner membrane translocation domain" evidence="9">
    <location>
        <begin position="996"/>
        <end position="1193"/>
    </location>
</feature>
<feature type="region of interest" description="Disordered" evidence="3">
    <location>
        <begin position="1124"/>
        <end position="1164"/>
    </location>
</feature>
<feature type="region of interest" description="C-terminal effector domain (CT), has tRNA nuclease activity" evidence="4">
    <location>
        <begin position="1147"/>
        <end position="1307"/>
    </location>
</feature>
<feature type="short sequence motif" description="ELYN C-terminal motif" evidence="8">
    <location>
        <begin position="992"/>
        <end position="995"/>
    </location>
</feature>
<feature type="compositionally biased region" description="Low complexity" evidence="3">
    <location>
        <begin position="317"/>
        <end position="336"/>
    </location>
</feature>
<feature type="compositionally biased region" description="Low complexity" evidence="3">
    <location>
        <begin position="491"/>
        <end position="507"/>
    </location>
</feature>
<feature type="compositionally biased region" description="Polar residues" evidence="3">
    <location>
        <begin position="508"/>
        <end position="518"/>
    </location>
</feature>
<feature type="compositionally biased region" description="Polar residues" evidence="3">
    <location>
        <begin position="1125"/>
        <end position="1147"/>
    </location>
</feature>
<feature type="compositionally biased region" description="Low complexity" evidence="3">
    <location>
        <begin position="1148"/>
        <end position="1163"/>
    </location>
</feature>
<feature type="active site" evidence="9">
    <location>
        <position position="1195"/>
    </location>
</feature>
<feature type="active site" evidence="9">
    <location>
        <position position="1220"/>
    </location>
</feature>
<feature type="active site" evidence="9">
    <location>
        <position position="1234"/>
    </location>
</feature>
<feature type="active site" evidence="9">
    <location>
        <position position="1266"/>
    </location>
</feature>
<feature type="mutagenesis site" description="Protein not toxic in E.coli, CT domain has no tRNase activity, still interacts with cognate CdiI." evidence="5">
    <original>E</original>
    <variation>A</variation>
    <location>
        <position position="1195"/>
    </location>
</feature>
<feature type="mutagenesis site" description="Protein not toxic in E.coli, CT domain has no tRNase activity, still interacts with cognate CdiI." evidence="5">
    <original>D</original>
    <variation>A</variation>
    <location>
        <position position="1220"/>
    </location>
</feature>
<feature type="mutagenesis site" description="Protein not toxic in E.coli, CT domain has no tRNase activity, still interacts with cognate CdiI, CT fragment still binds tRNA." evidence="5">
    <original>D</original>
    <variation>A</variation>
    <location>
        <position position="1234"/>
    </location>
</feature>
<feature type="mutagenesis site" description="Protein not toxic in E.coli, CT domain has no tRNase activity, still interacts with cognate CdiI." evidence="5">
    <original>H</original>
    <variation>A</variation>
    <location>
        <position position="1266"/>
    </location>
</feature>
<feature type="mutagenesis site" description="CT domain not toxic in E.coli." evidence="4">
    <original>D</original>
    <variation>A</variation>
    <location>
        <position position="1271"/>
    </location>
</feature>
<feature type="mutagenesis site" description="CT domain not toxic in E.coli, CT domain has no tRNase activity." evidence="4 9">
    <original>D</original>
    <variation>A</variation>
    <location>
        <position position="1276"/>
    </location>
</feature>
<feature type="non-terminal residue">
    <location>
        <position position="1"/>
    </location>
</feature>
<feature type="helix" evidence="11">
    <location>
        <begin position="1193"/>
        <end position="1206"/>
    </location>
</feature>
<feature type="strand" evidence="11">
    <location>
        <begin position="1210"/>
        <end position="1212"/>
    </location>
</feature>
<feature type="strand" evidence="11">
    <location>
        <begin position="1218"/>
        <end position="1223"/>
    </location>
</feature>
<feature type="turn" evidence="11">
    <location>
        <begin position="1227"/>
        <end position="1230"/>
    </location>
</feature>
<feature type="helix" evidence="11">
    <location>
        <begin position="1242"/>
        <end position="1269"/>
    </location>
</feature>
<feature type="strand" evidence="11">
    <location>
        <begin position="1270"/>
        <end position="1275"/>
    </location>
</feature>
<feature type="helix" evidence="11">
    <location>
        <begin position="1277"/>
        <end position="1279"/>
    </location>
</feature>
<feature type="helix" evidence="11">
    <location>
        <begin position="1282"/>
        <end position="1292"/>
    </location>
</feature>
<feature type="helix" evidence="11">
    <location>
        <begin position="1297"/>
        <end position="1300"/>
    </location>
</feature>
<feature type="strand" evidence="11">
    <location>
        <begin position="1303"/>
        <end position="1305"/>
    </location>
</feature>
<reference key="1">
    <citation type="journal article" date="2008" name="PLoS Negl. Trop. Dis.">
        <title>Genetic diversity and microevolution of Burkholderia pseudomallei in the environment.</title>
        <authorList>
            <person name="Chantratita N."/>
            <person name="Wuthiekanun V."/>
            <person name="Limmathurotsakul D."/>
            <person name="Vesaratchavest M."/>
            <person name="Thanwisai A."/>
            <person name="Amornchai P."/>
            <person name="Tumapa S."/>
            <person name="Feil E.J."/>
            <person name="Day N.P."/>
            <person name="Peacock S.J."/>
        </authorList>
    </citation>
    <scope>NUCLEOTIDE SEQUENCE [GENOMIC DNA]</scope>
    <source>
        <strain>E479</strain>
    </source>
</reference>
<reference key="2">
    <citation type="journal article" date="2012" name="Mol. Microbiol.">
        <title>The toxin/immunity network of Burkholderia pseudomallei contact-dependent growth inhibition (CDI) systems.</title>
        <authorList>
            <person name="Nikolakakis K."/>
            <person name="Amber S."/>
            <person name="Wilbur J.S."/>
            <person name="Diner E.J."/>
            <person name="Aoki S.K."/>
            <person name="Poole S.J."/>
            <person name="Tuanyok A."/>
            <person name="Keim P.S."/>
            <person name="Peacock S."/>
            <person name="Hayes C.S."/>
            <person name="Low D.A."/>
        </authorList>
    </citation>
    <scope>FUNCTION</scope>
    <scope>INTERACTION WITH CDII</scope>
    <scope>SUBUNIT</scope>
    <scope>DOMAIN</scope>
    <scope>EXPRESSION IN E.COLI</scope>
    <scope>MUTAGENESIS OF ASP-1271 AND ASP-1276</scope>
    <source>
        <strain>E479</strain>
    </source>
</reference>
<reference evidence="10" key="3">
    <citation type="journal article" date="2016" name="J. Biol. Chem.">
        <title>Functional diversity of cytotoxic tRNase/immunity protein complexes from Burkholderia pseudomallei.</title>
        <authorList>
            <person name="Johnson P.M."/>
            <person name="Gucinski G.C."/>
            <person name="Garza-Sanchez F."/>
            <person name="Wong T."/>
            <person name="Hung L.W."/>
            <person name="Hayes C.S."/>
            <person name="Goulding C.W."/>
        </authorList>
    </citation>
    <scope>X-RAY CRYSTALLOGRAPHY (2.00 ANGSTROMS) OF 1147-1307 IN COMPLEX WITH CDII</scope>
    <scope>FUNCTION</scope>
    <scope>POSSIBLE ACTIVE SITE</scope>
    <scope>SUBUNIT</scope>
    <scope>TRNA-BINDING</scope>
    <scope>MUTAGENESIS OF GLU-1195; ASP-1220; ASP-1234; HIS-1266 AND ASP-1276</scope>
    <source>
        <strain>E479</strain>
    </source>
</reference>
<proteinExistence type="evidence at protein level"/>
<gene>
    <name type="primary">cdiA</name>
</gene>
<protein>
    <recommendedName>
        <fullName>tRNA nuclease CdiA</fullName>
        <ecNumber>3.1.-.-</ecNumber>
    </recommendedName>
    <alternativeName>
        <fullName evidence="6">CdiA-E479</fullName>
    </alternativeName>
    <alternativeName>
        <fullName>Toxin CdiA</fullName>
    </alternativeName>
</protein>
<sequence>SLDTTGNVDLTSANVKAGSLDLNAGNKLILDTATQTTHQVSRDGATSDKTTLGPAANLNVAGDASIKTGGDFQQNAGNLNVGGNLNANIGGNWNLGVQQTGEHKVVQRANGVSDTDLNSATGSTVNVGGKSAIGVGGDLTAQGARLDFGQGGTVAAKGNVTFGAASTTSTINANSSGDQGNRSYAETRHGADQALTGTTVKGGDTLNVVSGKDINVIGSTIDLKKGDANLLAAGDVNVGAATETHVYNSRETHSRSGVVSGTKIASSQDATSTVANGSLISADGVSIGSGKDINVQGSTVVGTHDVALNAAHDVNITTSQDTSQSSTTYQEQHSGLMSGGGLSFSVGNSKLAQQNQSSSVTNNASTVGSVDGNLTVNAGNTLHVKGSDLVAGKDVTGTAANIVVDSATDTTHQAQQQQTSKSGLTVGLSGSVGDAINNAISETQAARESAKDSNGRASALHSIAAAGDVAFGGLGAKALLDGAKGPQAPSIGVQVSVGSSHSSMQSSEDQTIQRGSSINAGGNAKLIATGNGTPKDGNITIAGSNVNAANVALVANNQVNLVNTTDTDKTQSSNSSSGSSVGVSIGTNGIGVSASMQRAHGDGNSDAAIQNNTHINASQTATIVSGGDTNVIGANVNANKVVADVGGNLNVASVQDTTVSAAHQSSAGGGFTISQTGGGASFSAQNGHADGNYAGVKEQAGIQAGSGGFDVTVKGNTDLKGAYIGSTADASKNSLTTGTLTTSDIENHSHYSANSAGFSAGASVGVSTKAVGPSSVSGSGGVTPMVFQNDSGDQSATTKSAVSVGAINITKPGEQTQDVANLNRDATNLNGTVSKTPDVQKMLSQQADTMNAAQAAGQTVSQGIGLYADGKRKDAIDAAKAAYERGDLVAMQSYIDQAKSWDEGGASRAGLQATGGALIGGLGGGSVLTAIGGAAGAGTSSLLAGQAEKISKSVGDMTGSSLVGNIAANVAATVGGALVGGSAGAAMASNVELYNAGNDPQKTDDRATIAGLQGLLSRTAAMASDAKAGVWNGMVNVAGVIVNIPNGGPFASPGDPGYVSLDGLKKPYKSGTSIGPDTEFLTPILATLGLGGKAAVGTDAGITSADVATVGNGALKNASGDLSAAANSARNQPYGQGASASQSPGTQGASSGSNISASNGSSSPTTIVASNPVDLNAFDRLNVVDPAVGKFRPGEAGAAAELENYLGGTLQRAPQGSSVDFVFSSGPNNGKTVDFMLTPDTVAQAAKINQFFDKNLNNFMNTLSDHAAAADFVPLDSRFLSEANKTLLVKAIGNLPQKLQAKIILIK</sequence>
<evidence type="ECO:0000250" key="1">
    <source>
        <dbReference type="UniProtKB" id="A0A1S4NYE3"/>
    </source>
</evidence>
<evidence type="ECO:0000250" key="2">
    <source>
        <dbReference type="UniProtKB" id="I1WVY3"/>
    </source>
</evidence>
<evidence type="ECO:0000256" key="3">
    <source>
        <dbReference type="SAM" id="MobiDB-lite"/>
    </source>
</evidence>
<evidence type="ECO:0000269" key="4">
    <source>
    </source>
</evidence>
<evidence type="ECO:0000269" key="5">
    <source>
    </source>
</evidence>
<evidence type="ECO:0000303" key="6">
    <source>
    </source>
</evidence>
<evidence type="ECO:0000305" key="7"/>
<evidence type="ECO:0000305" key="8">
    <source>
    </source>
</evidence>
<evidence type="ECO:0000305" key="9">
    <source>
    </source>
</evidence>
<evidence type="ECO:0007744" key="10">
    <source>
        <dbReference type="PDB" id="5J4A"/>
    </source>
</evidence>
<evidence type="ECO:0007829" key="11">
    <source>
        <dbReference type="PDB" id="5J4A"/>
    </source>
</evidence>
<accession>H9T8G6</accession>
<organism>
    <name type="scientific">Burkholderia pseudomallei</name>
    <name type="common">Pseudomonas pseudomallei</name>
    <dbReference type="NCBI Taxonomy" id="28450"/>
    <lineage>
        <taxon>Bacteria</taxon>
        <taxon>Pseudomonadati</taxon>
        <taxon>Pseudomonadota</taxon>
        <taxon>Betaproteobacteria</taxon>
        <taxon>Burkholderiales</taxon>
        <taxon>Burkholderiaceae</taxon>
        <taxon>Burkholderia</taxon>
        <taxon>pseudomallei group</taxon>
    </lineage>
</organism>
<name>CDIA9_BURPE</name>